<comment type="function">
    <text evidence="1">The enzymes which catalyze the reversible phosphorolysis of pyrimidine nucleosides are involved in the degradation of these compounds and in their utilization as carbon and energy sources, or in the rescue of pyrimidine bases for nucleotide synthesis.</text>
</comment>
<comment type="catalytic activity">
    <reaction evidence="1">
        <text>thymidine + phosphate = 2-deoxy-alpha-D-ribose 1-phosphate + thymine</text>
        <dbReference type="Rhea" id="RHEA:16037"/>
        <dbReference type="ChEBI" id="CHEBI:17748"/>
        <dbReference type="ChEBI" id="CHEBI:17821"/>
        <dbReference type="ChEBI" id="CHEBI:43474"/>
        <dbReference type="ChEBI" id="CHEBI:57259"/>
        <dbReference type="EC" id="2.4.2.4"/>
    </reaction>
</comment>
<comment type="pathway">
    <text evidence="1">Pyrimidine metabolism; dTMP biosynthesis via salvage pathway; dTMP from thymine: step 1/2.</text>
</comment>
<comment type="subunit">
    <text evidence="1">Homodimer.</text>
</comment>
<comment type="similarity">
    <text evidence="1">Belongs to the thymidine/pyrimidine-nucleoside phosphorylase family.</text>
</comment>
<reference key="1">
    <citation type="journal article" date="2005" name="Nucleic Acids Res.">
        <title>Genome dynamics and diversity of Shigella species, the etiologic agents of bacillary dysentery.</title>
        <authorList>
            <person name="Yang F."/>
            <person name="Yang J."/>
            <person name="Zhang X."/>
            <person name="Chen L."/>
            <person name="Jiang Y."/>
            <person name="Yan Y."/>
            <person name="Tang X."/>
            <person name="Wang J."/>
            <person name="Xiong Z."/>
            <person name="Dong J."/>
            <person name="Xue Y."/>
            <person name="Zhu Y."/>
            <person name="Xu X."/>
            <person name="Sun L."/>
            <person name="Chen S."/>
            <person name="Nie H."/>
            <person name="Peng J."/>
            <person name="Xu J."/>
            <person name="Wang Y."/>
            <person name="Yuan Z."/>
            <person name="Wen Y."/>
            <person name="Yao Z."/>
            <person name="Shen Y."/>
            <person name="Qiang B."/>
            <person name="Hou Y."/>
            <person name="Yu J."/>
            <person name="Jin Q."/>
        </authorList>
    </citation>
    <scope>NUCLEOTIDE SEQUENCE [LARGE SCALE GENOMIC DNA]</scope>
    <source>
        <strain>Ss046</strain>
    </source>
</reference>
<evidence type="ECO:0000255" key="1">
    <source>
        <dbReference type="HAMAP-Rule" id="MF_01628"/>
    </source>
</evidence>
<proteinExistence type="inferred from homology"/>
<organism>
    <name type="scientific">Shigella sonnei (strain Ss046)</name>
    <dbReference type="NCBI Taxonomy" id="300269"/>
    <lineage>
        <taxon>Bacteria</taxon>
        <taxon>Pseudomonadati</taxon>
        <taxon>Pseudomonadota</taxon>
        <taxon>Gammaproteobacteria</taxon>
        <taxon>Enterobacterales</taxon>
        <taxon>Enterobacteriaceae</taxon>
        <taxon>Shigella</taxon>
    </lineage>
</organism>
<feature type="chain" id="PRO_0000059069" description="Thymidine phosphorylase">
    <location>
        <begin position="1"/>
        <end position="440"/>
    </location>
</feature>
<protein>
    <recommendedName>
        <fullName evidence="1">Thymidine phosphorylase</fullName>
        <ecNumber evidence="1">2.4.2.4</ecNumber>
    </recommendedName>
    <alternativeName>
        <fullName evidence="1">TdRPase</fullName>
    </alternativeName>
</protein>
<name>TYPH_SHISS</name>
<sequence length="440" mass="47180">MFLAQEIIRKKRDGHALSDEEIRFFINGIRDNTISEGQIAALAMTIFFHDMTMPERVSLTMAMRDSGTVLDWKSLHLNGPIVDKHSTGGVGDVTSLMLGPMVAACGGYIPMISGRGLGHTGGTLDKLESIPGFDIFPDDNRFREIIKDVGVAIIGQTSSLAPADKRFYATRDITATVDSIPLITASILAKKLAEGLDALVMDVKVGSGAFMPTYELSEALAEAIVGVANGAGVRTTALLTDMNQVLASSAGNAVEVREAVQFLTGEYRNPRLFDVTMALCVEMLISGKLAKDDAEARAKLQAVLDNGKAAEVFGRMVAAQKGPTDFVENYAKYLPTAMLTKAVYADTEGFVSEMDTRALGMAVVAMGGGRRQASDTIDYSVGFTDMARLGDQVDGQRPLAVIHAKDENSWQEAAKAVKAAIKLADKAPESTPTVYRRISE</sequence>
<keyword id="KW-0328">Glycosyltransferase</keyword>
<keyword id="KW-1185">Reference proteome</keyword>
<keyword id="KW-0808">Transferase</keyword>
<accession>Q3YU11</accession>
<dbReference type="EC" id="2.4.2.4" evidence="1"/>
<dbReference type="EMBL" id="CP000038">
    <property type="protein sequence ID" value="AAZ91001.1"/>
    <property type="molecule type" value="Genomic_DNA"/>
</dbReference>
<dbReference type="RefSeq" id="WP_000477811.1">
    <property type="nucleotide sequence ID" value="NC_007384.1"/>
</dbReference>
<dbReference type="SMR" id="Q3YU11"/>
<dbReference type="GeneID" id="93777462"/>
<dbReference type="KEGG" id="ssn:SSON_4533"/>
<dbReference type="HOGENOM" id="CLU_025040_0_1_6"/>
<dbReference type="UniPathway" id="UPA00578">
    <property type="reaction ID" value="UER00638"/>
</dbReference>
<dbReference type="Proteomes" id="UP000002529">
    <property type="component" value="Chromosome"/>
</dbReference>
<dbReference type="GO" id="GO:0005829">
    <property type="term" value="C:cytosol"/>
    <property type="evidence" value="ECO:0007669"/>
    <property type="project" value="TreeGrafter"/>
</dbReference>
<dbReference type="GO" id="GO:0004645">
    <property type="term" value="F:1,4-alpha-oligoglucan phosphorylase activity"/>
    <property type="evidence" value="ECO:0007669"/>
    <property type="project" value="InterPro"/>
</dbReference>
<dbReference type="GO" id="GO:0009032">
    <property type="term" value="F:thymidine phosphorylase activity"/>
    <property type="evidence" value="ECO:0007669"/>
    <property type="project" value="UniProtKB-UniRule"/>
</dbReference>
<dbReference type="GO" id="GO:0006206">
    <property type="term" value="P:pyrimidine nucleobase metabolic process"/>
    <property type="evidence" value="ECO:0007669"/>
    <property type="project" value="InterPro"/>
</dbReference>
<dbReference type="GO" id="GO:0046104">
    <property type="term" value="P:thymidine metabolic process"/>
    <property type="evidence" value="ECO:0007669"/>
    <property type="project" value="UniProtKB-UniRule"/>
</dbReference>
<dbReference type="FunFam" id="3.40.1030.10:FF:000001">
    <property type="entry name" value="Thymidine phosphorylase"/>
    <property type="match status" value="1"/>
</dbReference>
<dbReference type="FunFam" id="3.90.1170.30:FF:000001">
    <property type="entry name" value="Thymidine phosphorylase"/>
    <property type="match status" value="1"/>
</dbReference>
<dbReference type="Gene3D" id="3.40.1030.10">
    <property type="entry name" value="Nucleoside phosphorylase/phosphoribosyltransferase catalytic domain"/>
    <property type="match status" value="1"/>
</dbReference>
<dbReference type="Gene3D" id="3.90.1170.30">
    <property type="entry name" value="Pyrimidine nucleoside phosphorylase-like, C-terminal domain"/>
    <property type="match status" value="1"/>
</dbReference>
<dbReference type="Gene3D" id="1.20.970.10">
    <property type="entry name" value="Transferase, Pyrimidine Nucleoside Phosphorylase, Chain C"/>
    <property type="match status" value="1"/>
</dbReference>
<dbReference type="HAMAP" id="MF_01628">
    <property type="entry name" value="Thymid_phosp"/>
    <property type="match status" value="1"/>
</dbReference>
<dbReference type="InterPro" id="IPR000312">
    <property type="entry name" value="Glycosyl_Trfase_fam3"/>
</dbReference>
<dbReference type="InterPro" id="IPR017459">
    <property type="entry name" value="Glycosyl_Trfase_fam3_N_dom"/>
</dbReference>
<dbReference type="InterPro" id="IPR036320">
    <property type="entry name" value="Glycosyl_Trfase_fam3_N_dom_sf"/>
</dbReference>
<dbReference type="InterPro" id="IPR035902">
    <property type="entry name" value="Nuc_phospho_transferase"/>
</dbReference>
<dbReference type="InterPro" id="IPR036566">
    <property type="entry name" value="PYNP-like_C_sf"/>
</dbReference>
<dbReference type="InterPro" id="IPR013102">
    <property type="entry name" value="PYNP_C"/>
</dbReference>
<dbReference type="InterPro" id="IPR018090">
    <property type="entry name" value="Pyrmidine_PPas_bac/euk"/>
</dbReference>
<dbReference type="InterPro" id="IPR017872">
    <property type="entry name" value="Pyrmidine_PPase_CS"/>
</dbReference>
<dbReference type="InterPro" id="IPR000053">
    <property type="entry name" value="Thymidine/pyrmidine_PPase"/>
</dbReference>
<dbReference type="InterPro" id="IPR013465">
    <property type="entry name" value="Thymidine_Pase"/>
</dbReference>
<dbReference type="NCBIfam" id="NF004490">
    <property type="entry name" value="PRK05820.1"/>
    <property type="match status" value="1"/>
</dbReference>
<dbReference type="NCBIfam" id="TIGR02643">
    <property type="entry name" value="T_phosphoryl"/>
    <property type="match status" value="1"/>
</dbReference>
<dbReference type="NCBIfam" id="TIGR02644">
    <property type="entry name" value="Y_phosphoryl"/>
    <property type="match status" value="1"/>
</dbReference>
<dbReference type="PANTHER" id="PTHR10515">
    <property type="entry name" value="THYMIDINE PHOSPHORYLASE"/>
    <property type="match status" value="1"/>
</dbReference>
<dbReference type="PANTHER" id="PTHR10515:SF0">
    <property type="entry name" value="THYMIDINE PHOSPHORYLASE"/>
    <property type="match status" value="1"/>
</dbReference>
<dbReference type="Pfam" id="PF02885">
    <property type="entry name" value="Glycos_trans_3N"/>
    <property type="match status" value="1"/>
</dbReference>
<dbReference type="Pfam" id="PF00591">
    <property type="entry name" value="Glycos_transf_3"/>
    <property type="match status" value="1"/>
</dbReference>
<dbReference type="Pfam" id="PF07831">
    <property type="entry name" value="PYNP_C"/>
    <property type="match status" value="1"/>
</dbReference>
<dbReference type="PIRSF" id="PIRSF000478">
    <property type="entry name" value="TP_PyNP"/>
    <property type="match status" value="1"/>
</dbReference>
<dbReference type="SMART" id="SM00941">
    <property type="entry name" value="PYNP_C"/>
    <property type="match status" value="1"/>
</dbReference>
<dbReference type="SUPFAM" id="SSF52418">
    <property type="entry name" value="Nucleoside phosphorylase/phosphoribosyltransferase catalytic domain"/>
    <property type="match status" value="1"/>
</dbReference>
<dbReference type="SUPFAM" id="SSF47648">
    <property type="entry name" value="Nucleoside phosphorylase/phosphoribosyltransferase N-terminal domain"/>
    <property type="match status" value="1"/>
</dbReference>
<dbReference type="SUPFAM" id="SSF54680">
    <property type="entry name" value="Pyrimidine nucleoside phosphorylase C-terminal domain"/>
    <property type="match status" value="1"/>
</dbReference>
<dbReference type="PROSITE" id="PS00647">
    <property type="entry name" value="THYMID_PHOSPHORYLASE"/>
    <property type="match status" value="1"/>
</dbReference>
<gene>
    <name evidence="1" type="primary">deoA</name>
    <name type="ordered locus">SSON_4533</name>
</gene>